<proteinExistence type="inferred from homology"/>
<feature type="chain" id="PRO_1000137771" description="Chaperone modulatory protein CbpM">
    <location>
        <begin position="1"/>
        <end position="101"/>
    </location>
</feature>
<reference key="1">
    <citation type="journal article" date="2009" name="PLoS Genet.">
        <title>Organised genome dynamics in the Escherichia coli species results in highly diverse adaptive paths.</title>
        <authorList>
            <person name="Touchon M."/>
            <person name="Hoede C."/>
            <person name="Tenaillon O."/>
            <person name="Barbe V."/>
            <person name="Baeriswyl S."/>
            <person name="Bidet P."/>
            <person name="Bingen E."/>
            <person name="Bonacorsi S."/>
            <person name="Bouchier C."/>
            <person name="Bouvet O."/>
            <person name="Calteau A."/>
            <person name="Chiapello H."/>
            <person name="Clermont O."/>
            <person name="Cruveiller S."/>
            <person name="Danchin A."/>
            <person name="Diard M."/>
            <person name="Dossat C."/>
            <person name="Karoui M.E."/>
            <person name="Frapy E."/>
            <person name="Garry L."/>
            <person name="Ghigo J.M."/>
            <person name="Gilles A.M."/>
            <person name="Johnson J."/>
            <person name="Le Bouguenec C."/>
            <person name="Lescat M."/>
            <person name="Mangenot S."/>
            <person name="Martinez-Jehanne V."/>
            <person name="Matic I."/>
            <person name="Nassif X."/>
            <person name="Oztas S."/>
            <person name="Petit M.A."/>
            <person name="Pichon C."/>
            <person name="Rouy Z."/>
            <person name="Ruf C.S."/>
            <person name="Schneider D."/>
            <person name="Tourret J."/>
            <person name="Vacherie B."/>
            <person name="Vallenet D."/>
            <person name="Medigue C."/>
            <person name="Rocha E.P.C."/>
            <person name="Denamur E."/>
        </authorList>
    </citation>
    <scope>NUCLEOTIDE SEQUENCE [LARGE SCALE GENOMIC DNA]</scope>
    <source>
        <strain>UMN026 / ExPEC</strain>
    </source>
</reference>
<gene>
    <name evidence="1" type="primary">cbpM</name>
    <name type="ordered locus">ECUMN_1181</name>
</gene>
<organism>
    <name type="scientific">Escherichia coli O17:K52:H18 (strain UMN026 / ExPEC)</name>
    <dbReference type="NCBI Taxonomy" id="585056"/>
    <lineage>
        <taxon>Bacteria</taxon>
        <taxon>Pseudomonadati</taxon>
        <taxon>Pseudomonadota</taxon>
        <taxon>Gammaproteobacteria</taxon>
        <taxon>Enterobacterales</taxon>
        <taxon>Enterobacteriaceae</taxon>
        <taxon>Escherichia</taxon>
    </lineage>
</organism>
<name>CBPM_ECOLU</name>
<evidence type="ECO:0000255" key="1">
    <source>
        <dbReference type="HAMAP-Rule" id="MF_01155"/>
    </source>
</evidence>
<dbReference type="EMBL" id="CU928163">
    <property type="protein sequence ID" value="CAR12390.1"/>
    <property type="molecule type" value="Genomic_DNA"/>
</dbReference>
<dbReference type="RefSeq" id="WP_000024560.1">
    <property type="nucleotide sequence ID" value="NC_011751.1"/>
</dbReference>
<dbReference type="RefSeq" id="YP_002411934.1">
    <property type="nucleotide sequence ID" value="NC_011751.1"/>
</dbReference>
<dbReference type="SMR" id="B7N3F4"/>
<dbReference type="STRING" id="585056.ECUMN_1181"/>
<dbReference type="GeneID" id="93776412"/>
<dbReference type="KEGG" id="eum:ECUMN_1181"/>
<dbReference type="PATRIC" id="fig|585056.7.peg.1378"/>
<dbReference type="HOGENOM" id="CLU_144710_3_1_6"/>
<dbReference type="Proteomes" id="UP000007097">
    <property type="component" value="Chromosome"/>
</dbReference>
<dbReference type="FunFam" id="1.10.1660.10:FF:000006">
    <property type="entry name" value="Chaperone modulatory protein CbpM"/>
    <property type="match status" value="1"/>
</dbReference>
<dbReference type="Gene3D" id="1.10.1660.10">
    <property type="match status" value="1"/>
</dbReference>
<dbReference type="HAMAP" id="MF_01155">
    <property type="entry name" value="CbpM"/>
    <property type="match status" value="1"/>
</dbReference>
<dbReference type="InterPro" id="IPR022835">
    <property type="entry name" value="CbpM"/>
</dbReference>
<dbReference type="NCBIfam" id="NF007617">
    <property type="entry name" value="PRK10265.1"/>
    <property type="match status" value="1"/>
</dbReference>
<dbReference type="Pfam" id="PF13591">
    <property type="entry name" value="MerR_2"/>
    <property type="match status" value="1"/>
</dbReference>
<sequence length="101" mass="11512">MANVTVTFTITEFCLHTGISEEELNEIVGLGVVEPREIQETTWVFDDHAAIVVQRAVRLRHELALDWPGIAVALTLMDDIAHLKQENRLLRQRLSRFVAHP</sequence>
<comment type="function">
    <text evidence="1">Interacts with CbpA and inhibits both the DnaJ-like co-chaperone activity and the DNA binding activity of CbpA. Together with CbpA, modulates the activity of the DnaK chaperone system. Does not inhibit the co-chaperone activity of DnaJ.</text>
</comment>
<comment type="similarity">
    <text evidence="1">Belongs to the CbpM family.</text>
</comment>
<accession>B7N3F4</accession>
<protein>
    <recommendedName>
        <fullName evidence="1">Chaperone modulatory protein CbpM</fullName>
    </recommendedName>
</protein>